<gene>
    <name evidence="3" type="primary">tsi4</name>
    <name type="ordered locus">PA2775</name>
</gene>
<name>TSI4_PSEAE</name>
<comment type="function">
    <text evidence="2">Immunity protein that plays a role in preventing early activation of toxin Tse4.</text>
</comment>
<comment type="subcellular location">
    <subcellularLocation>
        <location evidence="1">Membrane</location>
        <topology evidence="1">Multi-pass membrane protein</topology>
    </subcellularLocation>
</comment>
<comment type="disruption phenotype">
    <text evidence="2">Deletion mutant together with deletion of toxin Tse4 leads to a significant loss of fitness advantage when placed in competition with parental strains.</text>
</comment>
<organism>
    <name type="scientific">Pseudomonas aeruginosa (strain ATCC 15692 / DSM 22644 / CIP 104116 / JCM 14847 / LMG 12228 / 1C / PRS 101 / PAO1)</name>
    <dbReference type="NCBI Taxonomy" id="208964"/>
    <lineage>
        <taxon>Bacteria</taxon>
        <taxon>Pseudomonadati</taxon>
        <taxon>Pseudomonadota</taxon>
        <taxon>Gammaproteobacteria</taxon>
        <taxon>Pseudomonadales</taxon>
        <taxon>Pseudomonadaceae</taxon>
        <taxon>Pseudomonas</taxon>
    </lineage>
</organism>
<reference key="1">
    <citation type="journal article" date="2000" name="Nature">
        <title>Complete genome sequence of Pseudomonas aeruginosa PAO1, an opportunistic pathogen.</title>
        <authorList>
            <person name="Stover C.K."/>
            <person name="Pham X.-Q.T."/>
            <person name="Erwin A.L."/>
            <person name="Mizoguchi S.D."/>
            <person name="Warrener P."/>
            <person name="Hickey M.J."/>
            <person name="Brinkman F.S.L."/>
            <person name="Hufnagle W.O."/>
            <person name="Kowalik D.J."/>
            <person name="Lagrou M."/>
            <person name="Garber R.L."/>
            <person name="Goltry L."/>
            <person name="Tolentino E."/>
            <person name="Westbrock-Wadman S."/>
            <person name="Yuan Y."/>
            <person name="Brody L.L."/>
            <person name="Coulter S.N."/>
            <person name="Folger K.R."/>
            <person name="Kas A."/>
            <person name="Larbig K."/>
            <person name="Lim R.M."/>
            <person name="Smith K.A."/>
            <person name="Spencer D.H."/>
            <person name="Wong G.K.-S."/>
            <person name="Wu Z."/>
            <person name="Paulsen I.T."/>
            <person name="Reizer J."/>
            <person name="Saier M.H. Jr."/>
            <person name="Hancock R.E.W."/>
            <person name="Lory S."/>
            <person name="Olson M.V."/>
        </authorList>
    </citation>
    <scope>NUCLEOTIDE SEQUENCE [LARGE SCALE GENOMIC DNA]</scope>
    <source>
        <strain>ATCC 15692 / DSM 22644 / CIP 104116 / JCM 14847 / LMG 12228 / 1C / PRS 101 / PAO1</strain>
    </source>
</reference>
<reference key="2">
    <citation type="journal article" date="2014" name="Mol. Microbiol.">
        <title>Genetically distinct pathways guide effector export through the type VI secretion system.</title>
        <authorList>
            <person name="Whitney J.C."/>
            <person name="Beck C.M."/>
            <person name="Goo Y.A."/>
            <person name="Russell A.B."/>
            <person name="Harding B.N."/>
            <person name="De Leon J.A."/>
            <person name="Cunningham D.A."/>
            <person name="Tran B.Q."/>
            <person name="Low D.A."/>
            <person name="Goodlett D.R."/>
            <person name="Hayes C.S."/>
            <person name="Mougous J.D."/>
        </authorList>
    </citation>
    <scope>FUNCTION</scope>
    <scope>DISRUPTION PHENOTYPE</scope>
    <source>
        <strain>ATCC 15692 / DSM 22644 / CIP 104116 / JCM 14847 / LMG 12228 / 1C / PRS 101 / PAO1</strain>
    </source>
</reference>
<sequence>MTTSSGSRIGGLLHASLFSLLGLGLLLAGGFKTVERYHFLRTAQEAQGTVSALNAGGSHPQIDFTSVSGERISYPQGGFIFGYQVGEPVRVLYEAGRPAASAIVDDAGALWGTGAFLCGFGALFGIVGFRGLLGLRSSQPTSKGH</sequence>
<keyword id="KW-0472">Membrane</keyword>
<keyword id="KW-1185">Reference proteome</keyword>
<keyword id="KW-0812">Transmembrane</keyword>
<keyword id="KW-1133">Transmembrane helix</keyword>
<proteinExistence type="inferred from homology"/>
<protein>
    <recommendedName>
        <fullName evidence="3">Immune protein Tsi4</fullName>
    </recommendedName>
</protein>
<feature type="chain" id="PRO_0000449110" description="Immune protein Tsi4">
    <location>
        <begin position="1"/>
        <end position="145"/>
    </location>
</feature>
<feature type="transmembrane region" description="Helical" evidence="1">
    <location>
        <begin position="9"/>
        <end position="29"/>
    </location>
</feature>
<feature type="transmembrane region" description="Helical" evidence="1">
    <location>
        <begin position="109"/>
        <end position="129"/>
    </location>
</feature>
<dbReference type="EMBL" id="AE004091">
    <property type="protein sequence ID" value="AAG06163.1"/>
    <property type="molecule type" value="Genomic_DNA"/>
</dbReference>
<dbReference type="PIR" id="F83298">
    <property type="entry name" value="F83298"/>
</dbReference>
<dbReference type="RefSeq" id="NP_251465.1">
    <property type="nucleotide sequence ID" value="NC_002516.2"/>
</dbReference>
<dbReference type="RefSeq" id="WP_003114429.1">
    <property type="nucleotide sequence ID" value="NZ_QZGE01000011.1"/>
</dbReference>
<dbReference type="SMR" id="Q9I068"/>
<dbReference type="STRING" id="208964.PA2775"/>
<dbReference type="PaxDb" id="208964-PA2775"/>
<dbReference type="GeneID" id="880541"/>
<dbReference type="KEGG" id="pae:PA2775"/>
<dbReference type="PATRIC" id="fig|208964.12.peg.2913"/>
<dbReference type="PseudoCAP" id="PA2775"/>
<dbReference type="HOGENOM" id="CLU_130398_0_0_6"/>
<dbReference type="InParanoid" id="Q9I068"/>
<dbReference type="OrthoDB" id="9102337at2"/>
<dbReference type="BioCyc" id="PAER208964:G1FZ6-2822-MONOMER"/>
<dbReference type="Proteomes" id="UP000002438">
    <property type="component" value="Chromosome"/>
</dbReference>
<dbReference type="GO" id="GO:0016020">
    <property type="term" value="C:membrane"/>
    <property type="evidence" value="ECO:0007669"/>
    <property type="project" value="UniProtKB-SubCell"/>
</dbReference>
<accession>Q9I068</accession>
<evidence type="ECO:0000255" key="1"/>
<evidence type="ECO:0000269" key="2">
    <source>
    </source>
</evidence>
<evidence type="ECO:0000303" key="3">
    <source>
    </source>
</evidence>